<keyword id="KW-0067">ATP-binding</keyword>
<keyword id="KW-0997">Cell inner membrane</keyword>
<keyword id="KW-1003">Cell membrane</keyword>
<keyword id="KW-0445">Lipid transport</keyword>
<keyword id="KW-0472">Membrane</keyword>
<keyword id="KW-0547">Nucleotide-binding</keyword>
<keyword id="KW-1185">Reference proteome</keyword>
<keyword id="KW-1278">Translocase</keyword>
<keyword id="KW-0812">Transmembrane</keyword>
<keyword id="KW-1133">Transmembrane helix</keyword>
<keyword id="KW-0813">Transport</keyword>
<dbReference type="EC" id="7.5.2.6" evidence="1"/>
<dbReference type="EMBL" id="CP000038">
    <property type="protein sequence ID" value="AAZ87655.1"/>
    <property type="molecule type" value="Genomic_DNA"/>
</dbReference>
<dbReference type="RefSeq" id="WP_000551265.1">
    <property type="nucleotide sequence ID" value="NC_007384.1"/>
</dbReference>
<dbReference type="SMR" id="Q3Z3K7"/>
<dbReference type="GeneID" id="93776501"/>
<dbReference type="KEGG" id="ssn:SSON_0916"/>
<dbReference type="HOGENOM" id="CLU_000604_84_3_6"/>
<dbReference type="Proteomes" id="UP000002529">
    <property type="component" value="Chromosome"/>
</dbReference>
<dbReference type="GO" id="GO:0005886">
    <property type="term" value="C:plasma membrane"/>
    <property type="evidence" value="ECO:0007669"/>
    <property type="project" value="UniProtKB-SubCell"/>
</dbReference>
<dbReference type="GO" id="GO:0015421">
    <property type="term" value="F:ABC-type oligopeptide transporter activity"/>
    <property type="evidence" value="ECO:0007669"/>
    <property type="project" value="TreeGrafter"/>
</dbReference>
<dbReference type="GO" id="GO:0005524">
    <property type="term" value="F:ATP binding"/>
    <property type="evidence" value="ECO:0007669"/>
    <property type="project" value="UniProtKB-KW"/>
</dbReference>
<dbReference type="GO" id="GO:0016887">
    <property type="term" value="F:ATP hydrolysis activity"/>
    <property type="evidence" value="ECO:0007669"/>
    <property type="project" value="InterPro"/>
</dbReference>
<dbReference type="GO" id="GO:0034040">
    <property type="term" value="F:ATPase-coupled lipid transmembrane transporter activity"/>
    <property type="evidence" value="ECO:0007669"/>
    <property type="project" value="InterPro"/>
</dbReference>
<dbReference type="CDD" id="cd18552">
    <property type="entry name" value="ABC_6TM_MsbA_like"/>
    <property type="match status" value="1"/>
</dbReference>
<dbReference type="CDD" id="cd03251">
    <property type="entry name" value="ABCC_MsbA"/>
    <property type="match status" value="1"/>
</dbReference>
<dbReference type="FunFam" id="1.20.1560.10:FF:000008">
    <property type="entry name" value="Lipid A export ATP-binding/permease protein MsbA"/>
    <property type="match status" value="1"/>
</dbReference>
<dbReference type="FunFam" id="3.40.50.300:FF:000140">
    <property type="entry name" value="Lipid A export ATP-binding/permease protein MsbA"/>
    <property type="match status" value="1"/>
</dbReference>
<dbReference type="Gene3D" id="1.20.1560.10">
    <property type="entry name" value="ABC transporter type 1, transmembrane domain"/>
    <property type="match status" value="1"/>
</dbReference>
<dbReference type="Gene3D" id="3.40.50.300">
    <property type="entry name" value="P-loop containing nucleotide triphosphate hydrolases"/>
    <property type="match status" value="1"/>
</dbReference>
<dbReference type="InterPro" id="IPR003593">
    <property type="entry name" value="AAA+_ATPase"/>
</dbReference>
<dbReference type="InterPro" id="IPR011527">
    <property type="entry name" value="ABC1_TM_dom"/>
</dbReference>
<dbReference type="InterPro" id="IPR036640">
    <property type="entry name" value="ABC1_TM_sf"/>
</dbReference>
<dbReference type="InterPro" id="IPR003439">
    <property type="entry name" value="ABC_transporter-like_ATP-bd"/>
</dbReference>
<dbReference type="InterPro" id="IPR017871">
    <property type="entry name" value="ABC_transporter-like_CS"/>
</dbReference>
<dbReference type="InterPro" id="IPR011917">
    <property type="entry name" value="ABC_transpr_lipidA"/>
</dbReference>
<dbReference type="InterPro" id="IPR027417">
    <property type="entry name" value="P-loop_NTPase"/>
</dbReference>
<dbReference type="InterPro" id="IPR039421">
    <property type="entry name" value="Type_1_exporter"/>
</dbReference>
<dbReference type="NCBIfam" id="TIGR02203">
    <property type="entry name" value="MsbA_lipidA"/>
    <property type="match status" value="1"/>
</dbReference>
<dbReference type="NCBIfam" id="NF008381">
    <property type="entry name" value="PRK11176.1"/>
    <property type="match status" value="1"/>
</dbReference>
<dbReference type="PANTHER" id="PTHR43394:SF1">
    <property type="entry name" value="ATP-BINDING CASSETTE SUB-FAMILY B MEMBER 10, MITOCHONDRIAL"/>
    <property type="match status" value="1"/>
</dbReference>
<dbReference type="PANTHER" id="PTHR43394">
    <property type="entry name" value="ATP-DEPENDENT PERMEASE MDL1, MITOCHONDRIAL"/>
    <property type="match status" value="1"/>
</dbReference>
<dbReference type="Pfam" id="PF00664">
    <property type="entry name" value="ABC_membrane"/>
    <property type="match status" value="1"/>
</dbReference>
<dbReference type="Pfam" id="PF00005">
    <property type="entry name" value="ABC_tran"/>
    <property type="match status" value="1"/>
</dbReference>
<dbReference type="SMART" id="SM00382">
    <property type="entry name" value="AAA"/>
    <property type="match status" value="1"/>
</dbReference>
<dbReference type="SUPFAM" id="SSF90123">
    <property type="entry name" value="ABC transporter transmembrane region"/>
    <property type="match status" value="1"/>
</dbReference>
<dbReference type="SUPFAM" id="SSF52540">
    <property type="entry name" value="P-loop containing nucleoside triphosphate hydrolases"/>
    <property type="match status" value="1"/>
</dbReference>
<dbReference type="PROSITE" id="PS50929">
    <property type="entry name" value="ABC_TM1F"/>
    <property type="match status" value="1"/>
</dbReference>
<dbReference type="PROSITE" id="PS00211">
    <property type="entry name" value="ABC_TRANSPORTER_1"/>
    <property type="match status" value="1"/>
</dbReference>
<dbReference type="PROSITE" id="PS50893">
    <property type="entry name" value="ABC_TRANSPORTER_2"/>
    <property type="match status" value="1"/>
</dbReference>
<dbReference type="PROSITE" id="PS51239">
    <property type="entry name" value="MSBA"/>
    <property type="match status" value="1"/>
</dbReference>
<reference key="1">
    <citation type="journal article" date="2005" name="Nucleic Acids Res.">
        <title>Genome dynamics and diversity of Shigella species, the etiologic agents of bacillary dysentery.</title>
        <authorList>
            <person name="Yang F."/>
            <person name="Yang J."/>
            <person name="Zhang X."/>
            <person name="Chen L."/>
            <person name="Jiang Y."/>
            <person name="Yan Y."/>
            <person name="Tang X."/>
            <person name="Wang J."/>
            <person name="Xiong Z."/>
            <person name="Dong J."/>
            <person name="Xue Y."/>
            <person name="Zhu Y."/>
            <person name="Xu X."/>
            <person name="Sun L."/>
            <person name="Chen S."/>
            <person name="Nie H."/>
            <person name="Peng J."/>
            <person name="Xu J."/>
            <person name="Wang Y."/>
            <person name="Yuan Z."/>
            <person name="Wen Y."/>
            <person name="Yao Z."/>
            <person name="Shen Y."/>
            <person name="Qiang B."/>
            <person name="Hou Y."/>
            <person name="Yu J."/>
            <person name="Jin Q."/>
        </authorList>
    </citation>
    <scope>NUCLEOTIDE SEQUENCE [LARGE SCALE GENOMIC DNA]</scope>
    <source>
        <strain>Ss046</strain>
    </source>
</reference>
<name>MSBA_SHISS</name>
<protein>
    <recommendedName>
        <fullName evidence="1">ATP-dependent lipid A-core flippase</fullName>
        <ecNumber evidence="1">7.5.2.6</ecNumber>
    </recommendedName>
    <alternativeName>
        <fullName evidence="1">Lipid A export ATP-binding/permease protein MsbA</fullName>
    </alternativeName>
</protein>
<proteinExistence type="inferred from homology"/>
<feature type="chain" id="PRO_0000271658" description="ATP-dependent lipid A-core flippase">
    <location>
        <begin position="1"/>
        <end position="582"/>
    </location>
</feature>
<feature type="transmembrane region" description="Helical" evidence="1">
    <location>
        <begin position="16"/>
        <end position="36"/>
    </location>
</feature>
<feature type="transmembrane region" description="Helical" evidence="1">
    <location>
        <begin position="63"/>
        <end position="83"/>
    </location>
</feature>
<feature type="transmembrane region" description="Helical" evidence="1">
    <location>
        <begin position="153"/>
        <end position="173"/>
    </location>
</feature>
<feature type="transmembrane region" description="Helical" evidence="1">
    <location>
        <begin position="253"/>
        <end position="273"/>
    </location>
</feature>
<feature type="transmembrane region" description="Helical" evidence="1">
    <location>
        <begin position="275"/>
        <end position="295"/>
    </location>
</feature>
<feature type="domain" description="ABC transmembrane type-1" evidence="1">
    <location>
        <begin position="28"/>
        <end position="310"/>
    </location>
</feature>
<feature type="domain" description="ABC transporter" evidence="1">
    <location>
        <begin position="342"/>
        <end position="578"/>
    </location>
</feature>
<feature type="binding site" evidence="1">
    <location>
        <begin position="376"/>
        <end position="383"/>
    </location>
    <ligand>
        <name>ATP</name>
        <dbReference type="ChEBI" id="CHEBI:30616"/>
    </ligand>
</feature>
<comment type="function">
    <text evidence="1">Involved in lipopolysaccharide (LPS) biosynthesis. Translocates lipid A-core from the inner to the outer leaflet of the inner membrane. Transmembrane domains (TMD) form a pore in the inner membrane and the ATP-binding domain (NBD) is responsible for energy generation.</text>
</comment>
<comment type="catalytic activity">
    <reaction evidence="1">
        <text>ATP + H2O + lipid A-core oligosaccharideSide 1 = ADP + phosphate + lipid A-core oligosaccharideSide 2.</text>
        <dbReference type="EC" id="7.5.2.6"/>
    </reaction>
</comment>
<comment type="subunit">
    <text evidence="1">Homodimer.</text>
</comment>
<comment type="subcellular location">
    <subcellularLocation>
        <location evidence="1">Cell inner membrane</location>
        <topology evidence="1">Multi-pass membrane protein</topology>
    </subcellularLocation>
</comment>
<comment type="domain">
    <text evidence="1">In MsbA the ATP-binding domain (NBD) and the transmembrane domain (TMD) are fused.</text>
</comment>
<comment type="similarity">
    <text evidence="1">Belongs to the ABC transporter superfamily. Lipid exporter (TC 3.A.1.106) family.</text>
</comment>
<evidence type="ECO:0000255" key="1">
    <source>
        <dbReference type="HAMAP-Rule" id="MF_01703"/>
    </source>
</evidence>
<sequence length="582" mass="64470">MHNDKDLSTWQTFRRLWPTIAPFKAGLIVAGVALILNAASDTFMLSLLKPLLDDGFGKTDRSVLVWMPLVVIGLMILRGITSYVSSYCISWVSGKVVMTMRRRLFGHMMGMPVSFFDKQSTGTLLSRITYDSEQVASSSSGALITVVREGASIIGLFIMMFYYSWQLSIILIVLAPIVSIAIRVVSKRFRNISKNMQNTMGQVTTSAEQMLKGHKEVLIFGGQEVETKRFDKVSNRMRLQGMKMVSASSISDPIIQLIASLALAFVLYAASFPSVMDNLTAGTITVVFSSMIALMRPLKSLTNVNAQFQRGMAACQTLFTILDSEQEKDEGKRVIERATGDVEFRNVTFTYPGRDVPALRNINLKIPAGKTVALVGRSGSGKSTIASLITRFYDIDEGEILMDGHDLREYTLASLRNQVALVSQNVHLFNDTVANNIAYARTEQYSREQIEEAARMAYAIDFINKMDNGLDTVIGENGVLLSGGQRQRIAIARALLRDSPILILDEATSALDTESERAIQAALDELQKNRTSLVIAHRLSTIEKADEIVVVEDGVIVERGTHNDLLEHRGVYAQLHKMQFGQ</sequence>
<gene>
    <name evidence="1" type="primary">msbA</name>
    <name type="ordered locus">SSON_0916</name>
</gene>
<accession>Q3Z3K7</accession>
<organism>
    <name type="scientific">Shigella sonnei (strain Ss046)</name>
    <dbReference type="NCBI Taxonomy" id="300269"/>
    <lineage>
        <taxon>Bacteria</taxon>
        <taxon>Pseudomonadati</taxon>
        <taxon>Pseudomonadota</taxon>
        <taxon>Gammaproteobacteria</taxon>
        <taxon>Enterobacterales</taxon>
        <taxon>Enterobacteriaceae</taxon>
        <taxon>Shigella</taxon>
    </lineage>
</organism>